<protein>
    <recommendedName>
        <fullName evidence="1">Large ribosomal subunit protein uL14</fullName>
    </recommendedName>
    <alternativeName>
        <fullName evidence="2">50S ribosomal protein L14</fullName>
    </alternativeName>
</protein>
<accession>B7MCS5</accession>
<evidence type="ECO:0000255" key="1">
    <source>
        <dbReference type="HAMAP-Rule" id="MF_01367"/>
    </source>
</evidence>
<evidence type="ECO:0000305" key="2"/>
<dbReference type="EMBL" id="CU928161">
    <property type="protein sequence ID" value="CAR04914.1"/>
    <property type="molecule type" value="Genomic_DNA"/>
</dbReference>
<dbReference type="RefSeq" id="WP_000613955.1">
    <property type="nucleotide sequence ID" value="NC_011742.1"/>
</dbReference>
<dbReference type="EMDB" id="EMD-7970"/>
<dbReference type="EMDB" id="EMD-8826"/>
<dbReference type="EMDB" id="EMD-8829"/>
<dbReference type="SMR" id="B7MCS5"/>
<dbReference type="IntAct" id="B7MCS5">
    <property type="interactions" value="1"/>
</dbReference>
<dbReference type="GeneID" id="93778677"/>
<dbReference type="KEGG" id="ecz:ECS88_3697"/>
<dbReference type="HOGENOM" id="CLU_095071_2_1_6"/>
<dbReference type="Proteomes" id="UP000000747">
    <property type="component" value="Chromosome"/>
</dbReference>
<dbReference type="GO" id="GO:0022625">
    <property type="term" value="C:cytosolic large ribosomal subunit"/>
    <property type="evidence" value="ECO:0007669"/>
    <property type="project" value="TreeGrafter"/>
</dbReference>
<dbReference type="GO" id="GO:0070180">
    <property type="term" value="F:large ribosomal subunit rRNA binding"/>
    <property type="evidence" value="ECO:0007669"/>
    <property type="project" value="TreeGrafter"/>
</dbReference>
<dbReference type="GO" id="GO:0003735">
    <property type="term" value="F:structural constituent of ribosome"/>
    <property type="evidence" value="ECO:0007669"/>
    <property type="project" value="InterPro"/>
</dbReference>
<dbReference type="GO" id="GO:0006412">
    <property type="term" value="P:translation"/>
    <property type="evidence" value="ECO:0007669"/>
    <property type="project" value="UniProtKB-UniRule"/>
</dbReference>
<dbReference type="CDD" id="cd00337">
    <property type="entry name" value="Ribosomal_uL14"/>
    <property type="match status" value="1"/>
</dbReference>
<dbReference type="FunFam" id="2.40.150.20:FF:000001">
    <property type="entry name" value="50S ribosomal protein L14"/>
    <property type="match status" value="1"/>
</dbReference>
<dbReference type="Gene3D" id="2.40.150.20">
    <property type="entry name" value="Ribosomal protein L14"/>
    <property type="match status" value="1"/>
</dbReference>
<dbReference type="HAMAP" id="MF_01367">
    <property type="entry name" value="Ribosomal_uL14"/>
    <property type="match status" value="1"/>
</dbReference>
<dbReference type="InterPro" id="IPR000218">
    <property type="entry name" value="Ribosomal_uL14"/>
</dbReference>
<dbReference type="InterPro" id="IPR005745">
    <property type="entry name" value="Ribosomal_uL14_bac-type"/>
</dbReference>
<dbReference type="InterPro" id="IPR019972">
    <property type="entry name" value="Ribosomal_uL14_CS"/>
</dbReference>
<dbReference type="InterPro" id="IPR036853">
    <property type="entry name" value="Ribosomal_uL14_sf"/>
</dbReference>
<dbReference type="NCBIfam" id="TIGR01067">
    <property type="entry name" value="rplN_bact"/>
    <property type="match status" value="1"/>
</dbReference>
<dbReference type="PANTHER" id="PTHR11761">
    <property type="entry name" value="50S/60S RIBOSOMAL PROTEIN L14/L23"/>
    <property type="match status" value="1"/>
</dbReference>
<dbReference type="PANTHER" id="PTHR11761:SF3">
    <property type="entry name" value="LARGE RIBOSOMAL SUBUNIT PROTEIN UL14M"/>
    <property type="match status" value="1"/>
</dbReference>
<dbReference type="Pfam" id="PF00238">
    <property type="entry name" value="Ribosomal_L14"/>
    <property type="match status" value="1"/>
</dbReference>
<dbReference type="SMART" id="SM01374">
    <property type="entry name" value="Ribosomal_L14"/>
    <property type="match status" value="1"/>
</dbReference>
<dbReference type="SUPFAM" id="SSF50193">
    <property type="entry name" value="Ribosomal protein L14"/>
    <property type="match status" value="1"/>
</dbReference>
<dbReference type="PROSITE" id="PS00049">
    <property type="entry name" value="RIBOSOMAL_L14"/>
    <property type="match status" value="1"/>
</dbReference>
<proteinExistence type="inferred from homology"/>
<keyword id="KW-1185">Reference proteome</keyword>
<keyword id="KW-0687">Ribonucleoprotein</keyword>
<keyword id="KW-0689">Ribosomal protein</keyword>
<keyword id="KW-0694">RNA-binding</keyword>
<keyword id="KW-0699">rRNA-binding</keyword>
<feature type="chain" id="PRO_1000144262" description="Large ribosomal subunit protein uL14">
    <location>
        <begin position="1"/>
        <end position="123"/>
    </location>
</feature>
<gene>
    <name evidence="1" type="primary">rplN</name>
    <name type="ordered locus">ECS88_3697</name>
</gene>
<sequence>MIQEQTMLNVADNSGARRVMCIKVLGGSHRRYAGVGDIIKITIKEAIPRGKVKKGDVLKAVVVRTKKGVRRPDGSVIRFDGNACVLLNNNSEQPIGTRIFGPVTRELRSEKFMKIISLAPEVL</sequence>
<comment type="function">
    <text evidence="1">Binds to 23S rRNA. Forms part of two intersubunit bridges in the 70S ribosome.</text>
</comment>
<comment type="subunit">
    <text evidence="1">Part of the 50S ribosomal subunit. Forms a cluster with proteins L3 and L19. In the 70S ribosome, L14 and L19 interact and together make contacts with the 16S rRNA in bridges B5 and B8.</text>
</comment>
<comment type="similarity">
    <text evidence="1">Belongs to the universal ribosomal protein uL14 family.</text>
</comment>
<name>RL14_ECO45</name>
<reference key="1">
    <citation type="journal article" date="2009" name="PLoS Genet.">
        <title>Organised genome dynamics in the Escherichia coli species results in highly diverse adaptive paths.</title>
        <authorList>
            <person name="Touchon M."/>
            <person name="Hoede C."/>
            <person name="Tenaillon O."/>
            <person name="Barbe V."/>
            <person name="Baeriswyl S."/>
            <person name="Bidet P."/>
            <person name="Bingen E."/>
            <person name="Bonacorsi S."/>
            <person name="Bouchier C."/>
            <person name="Bouvet O."/>
            <person name="Calteau A."/>
            <person name="Chiapello H."/>
            <person name="Clermont O."/>
            <person name="Cruveiller S."/>
            <person name="Danchin A."/>
            <person name="Diard M."/>
            <person name="Dossat C."/>
            <person name="Karoui M.E."/>
            <person name="Frapy E."/>
            <person name="Garry L."/>
            <person name="Ghigo J.M."/>
            <person name="Gilles A.M."/>
            <person name="Johnson J."/>
            <person name="Le Bouguenec C."/>
            <person name="Lescat M."/>
            <person name="Mangenot S."/>
            <person name="Martinez-Jehanne V."/>
            <person name="Matic I."/>
            <person name="Nassif X."/>
            <person name="Oztas S."/>
            <person name="Petit M.A."/>
            <person name="Pichon C."/>
            <person name="Rouy Z."/>
            <person name="Ruf C.S."/>
            <person name="Schneider D."/>
            <person name="Tourret J."/>
            <person name="Vacherie B."/>
            <person name="Vallenet D."/>
            <person name="Medigue C."/>
            <person name="Rocha E.P.C."/>
            <person name="Denamur E."/>
        </authorList>
    </citation>
    <scope>NUCLEOTIDE SEQUENCE [LARGE SCALE GENOMIC DNA]</scope>
    <source>
        <strain>S88 / ExPEC</strain>
    </source>
</reference>
<organism>
    <name type="scientific">Escherichia coli O45:K1 (strain S88 / ExPEC)</name>
    <dbReference type="NCBI Taxonomy" id="585035"/>
    <lineage>
        <taxon>Bacteria</taxon>
        <taxon>Pseudomonadati</taxon>
        <taxon>Pseudomonadota</taxon>
        <taxon>Gammaproteobacteria</taxon>
        <taxon>Enterobacterales</taxon>
        <taxon>Enterobacteriaceae</taxon>
        <taxon>Escherichia</taxon>
    </lineage>
</organism>